<proteinExistence type="inferred from homology"/>
<reference key="1">
    <citation type="journal article" date="2005" name="Nucleic Acids Res.">
        <title>The genome sequence of Salmonella enterica serovar Choleraesuis, a highly invasive and resistant zoonotic pathogen.</title>
        <authorList>
            <person name="Chiu C.-H."/>
            <person name="Tang P."/>
            <person name="Chu C."/>
            <person name="Hu S."/>
            <person name="Bao Q."/>
            <person name="Yu J."/>
            <person name="Chou Y.-Y."/>
            <person name="Wang H.-S."/>
            <person name="Lee Y.-S."/>
        </authorList>
    </citation>
    <scope>NUCLEOTIDE SEQUENCE [LARGE SCALE GENOMIC DNA]</scope>
    <source>
        <strain>SC-B67</strain>
    </source>
</reference>
<sequence length="246" mass="26477">MAGHSKWANTRHRKAAQDAKRGKIFTKIIRELVTAAKLGGGDPDANPRLRAAVDKALANNMTRDTLNRAIARGVGGDEDSNMETIIYEGYGPGGTAIMIECLSDNRNRTVAEVRHAFSKCGGNLGTDGSVAYLFSKKGVISFEKGDEDTIMEAALEAGAEDVVTYDDGAIDVYTAWEEMGKVRDALEEAGLKADSAEVSMIPSTKADMDAETAPKLLRLIDMLEDCDDVQEVYHNGEISDEVAATL</sequence>
<dbReference type="EMBL" id="AE017220">
    <property type="protein sequence ID" value="AAX65813.1"/>
    <property type="molecule type" value="Genomic_DNA"/>
</dbReference>
<dbReference type="RefSeq" id="WP_000907244.1">
    <property type="nucleotide sequence ID" value="NC_006905.1"/>
</dbReference>
<dbReference type="SMR" id="Q57N98"/>
<dbReference type="KEGG" id="sec:SCH_1907"/>
<dbReference type="HOGENOM" id="CLU_062974_2_2_6"/>
<dbReference type="Proteomes" id="UP000000538">
    <property type="component" value="Chromosome"/>
</dbReference>
<dbReference type="GO" id="GO:0005829">
    <property type="term" value="C:cytosol"/>
    <property type="evidence" value="ECO:0007669"/>
    <property type="project" value="TreeGrafter"/>
</dbReference>
<dbReference type="GO" id="GO:0003677">
    <property type="term" value="F:DNA binding"/>
    <property type="evidence" value="ECO:0007669"/>
    <property type="project" value="UniProtKB-UniRule"/>
</dbReference>
<dbReference type="GO" id="GO:0006355">
    <property type="term" value="P:regulation of DNA-templated transcription"/>
    <property type="evidence" value="ECO:0007669"/>
    <property type="project" value="UniProtKB-UniRule"/>
</dbReference>
<dbReference type="FunFam" id="1.10.10.200:FF:000001">
    <property type="entry name" value="Probable transcriptional regulatory protein YebC"/>
    <property type="match status" value="1"/>
</dbReference>
<dbReference type="FunFam" id="3.30.70.980:FF:000002">
    <property type="entry name" value="Probable transcriptional regulatory protein YebC"/>
    <property type="match status" value="1"/>
</dbReference>
<dbReference type="Gene3D" id="1.10.10.200">
    <property type="match status" value="1"/>
</dbReference>
<dbReference type="Gene3D" id="3.30.70.980">
    <property type="match status" value="2"/>
</dbReference>
<dbReference type="HAMAP" id="MF_00693">
    <property type="entry name" value="Transcrip_reg_TACO1"/>
    <property type="match status" value="1"/>
</dbReference>
<dbReference type="InterPro" id="IPR017856">
    <property type="entry name" value="Integrase-like_N"/>
</dbReference>
<dbReference type="InterPro" id="IPR048300">
    <property type="entry name" value="TACO1_YebC-like_2nd/3rd_dom"/>
</dbReference>
<dbReference type="InterPro" id="IPR049083">
    <property type="entry name" value="TACO1_YebC_N"/>
</dbReference>
<dbReference type="InterPro" id="IPR002876">
    <property type="entry name" value="Transcrip_reg_TACO1-like"/>
</dbReference>
<dbReference type="InterPro" id="IPR026564">
    <property type="entry name" value="Transcrip_reg_TACO1-like_dom3"/>
</dbReference>
<dbReference type="InterPro" id="IPR029072">
    <property type="entry name" value="YebC-like"/>
</dbReference>
<dbReference type="NCBIfam" id="NF001030">
    <property type="entry name" value="PRK00110.1"/>
    <property type="match status" value="1"/>
</dbReference>
<dbReference type="NCBIfam" id="NF009044">
    <property type="entry name" value="PRK12378.1"/>
    <property type="match status" value="1"/>
</dbReference>
<dbReference type="NCBIfam" id="TIGR01033">
    <property type="entry name" value="YebC/PmpR family DNA-binding transcriptional regulator"/>
    <property type="match status" value="1"/>
</dbReference>
<dbReference type="PANTHER" id="PTHR12532:SF6">
    <property type="entry name" value="TRANSCRIPTIONAL REGULATORY PROTEIN YEBC-RELATED"/>
    <property type="match status" value="1"/>
</dbReference>
<dbReference type="PANTHER" id="PTHR12532">
    <property type="entry name" value="TRANSLATIONAL ACTIVATOR OF CYTOCHROME C OXIDASE 1"/>
    <property type="match status" value="1"/>
</dbReference>
<dbReference type="Pfam" id="PF20772">
    <property type="entry name" value="TACO1_YebC_N"/>
    <property type="match status" value="1"/>
</dbReference>
<dbReference type="Pfam" id="PF01709">
    <property type="entry name" value="Transcrip_reg"/>
    <property type="match status" value="1"/>
</dbReference>
<dbReference type="SUPFAM" id="SSF75625">
    <property type="entry name" value="YebC-like"/>
    <property type="match status" value="1"/>
</dbReference>
<organism>
    <name type="scientific">Salmonella choleraesuis (strain SC-B67)</name>
    <dbReference type="NCBI Taxonomy" id="321314"/>
    <lineage>
        <taxon>Bacteria</taxon>
        <taxon>Pseudomonadati</taxon>
        <taxon>Pseudomonadota</taxon>
        <taxon>Gammaproteobacteria</taxon>
        <taxon>Enterobacterales</taxon>
        <taxon>Enterobacteriaceae</taxon>
        <taxon>Salmonella</taxon>
    </lineage>
</organism>
<keyword id="KW-0963">Cytoplasm</keyword>
<keyword id="KW-0238">DNA-binding</keyword>
<keyword id="KW-0804">Transcription</keyword>
<keyword id="KW-0805">Transcription regulation</keyword>
<protein>
    <recommendedName>
        <fullName evidence="1">Probable transcriptional regulatory protein YebC</fullName>
    </recommendedName>
</protein>
<gene>
    <name evidence="1" type="primary">yebC</name>
    <name type="ordered locus">SCH_1907</name>
</gene>
<accession>Q57N98</accession>
<feature type="chain" id="PRO_0000257126" description="Probable transcriptional regulatory protein YebC">
    <location>
        <begin position="1"/>
        <end position="246"/>
    </location>
</feature>
<feature type="region of interest" description="Disordered" evidence="2">
    <location>
        <begin position="1"/>
        <end position="20"/>
    </location>
</feature>
<name>YEBC_SALCH</name>
<evidence type="ECO:0000255" key="1">
    <source>
        <dbReference type="HAMAP-Rule" id="MF_00693"/>
    </source>
</evidence>
<evidence type="ECO:0000256" key="2">
    <source>
        <dbReference type="SAM" id="MobiDB-lite"/>
    </source>
</evidence>
<comment type="subcellular location">
    <subcellularLocation>
        <location evidence="1">Cytoplasm</location>
    </subcellularLocation>
</comment>
<comment type="similarity">
    <text evidence="1">Belongs to the TACO1 family.</text>
</comment>